<protein>
    <recommendedName>
        <fullName evidence="1">Methylthioribose-1-phosphate isomerase 1</fullName>
        <shortName evidence="1">M1Pi 1</shortName>
        <shortName evidence="1">MTR-1-P isomerase 1</shortName>
        <ecNumber evidence="1">5.3.1.23</ecNumber>
    </recommendedName>
    <alternativeName>
        <fullName evidence="1">S-methyl-5-thioribose-1-phosphate isomerase 1</fullName>
    </alternativeName>
</protein>
<feature type="chain" id="PRO_0000357260" description="Methylthioribose-1-phosphate isomerase 1">
    <location>
        <begin position="1"/>
        <end position="346"/>
    </location>
</feature>
<feature type="active site" description="Proton donor" evidence="1">
    <location>
        <position position="237"/>
    </location>
</feature>
<feature type="binding site" evidence="1">
    <location>
        <begin position="48"/>
        <end position="50"/>
    </location>
    <ligand>
        <name>substrate</name>
    </ligand>
</feature>
<feature type="binding site" evidence="1">
    <location>
        <position position="91"/>
    </location>
    <ligand>
        <name>substrate</name>
    </ligand>
</feature>
<feature type="binding site" evidence="1">
    <location>
        <position position="196"/>
    </location>
    <ligand>
        <name>substrate</name>
    </ligand>
</feature>
<feature type="binding site" evidence="1">
    <location>
        <begin position="247"/>
        <end position="248"/>
    </location>
    <ligand>
        <name>substrate</name>
    </ligand>
</feature>
<feature type="site" description="Transition state stabilizer" evidence="1">
    <location>
        <position position="157"/>
    </location>
</feature>
<dbReference type="EC" id="5.3.1.23" evidence="1"/>
<dbReference type="EMBL" id="CP000812">
    <property type="protein sequence ID" value="ABV32637.1"/>
    <property type="molecule type" value="Genomic_DNA"/>
</dbReference>
<dbReference type="SMR" id="A8F3A3"/>
<dbReference type="STRING" id="416591.Tlet_0065"/>
<dbReference type="KEGG" id="tle:Tlet_0065"/>
<dbReference type="eggNOG" id="COG0182">
    <property type="taxonomic scope" value="Bacteria"/>
</dbReference>
<dbReference type="HOGENOM" id="CLU_016218_1_2_0"/>
<dbReference type="OrthoDB" id="9803436at2"/>
<dbReference type="UniPathway" id="UPA00904">
    <property type="reaction ID" value="UER00874"/>
</dbReference>
<dbReference type="Proteomes" id="UP000002016">
    <property type="component" value="Chromosome"/>
</dbReference>
<dbReference type="GO" id="GO:0046523">
    <property type="term" value="F:S-methyl-5-thioribose-1-phosphate isomerase activity"/>
    <property type="evidence" value="ECO:0007669"/>
    <property type="project" value="UniProtKB-UniRule"/>
</dbReference>
<dbReference type="GO" id="GO:0019509">
    <property type="term" value="P:L-methionine salvage from methylthioadenosine"/>
    <property type="evidence" value="ECO:0007669"/>
    <property type="project" value="UniProtKB-UniRule"/>
</dbReference>
<dbReference type="FunFam" id="1.20.120.420:FF:000003">
    <property type="entry name" value="Methylthioribose-1-phosphate isomerase"/>
    <property type="match status" value="1"/>
</dbReference>
<dbReference type="FunFam" id="3.40.50.10470:FF:000010">
    <property type="entry name" value="Methylthioribose-1-phosphate isomerase"/>
    <property type="match status" value="1"/>
</dbReference>
<dbReference type="Gene3D" id="1.20.120.420">
    <property type="entry name" value="translation initiation factor eif-2b, domain 1"/>
    <property type="match status" value="1"/>
</dbReference>
<dbReference type="Gene3D" id="3.40.50.10470">
    <property type="entry name" value="Translation initiation factor eif-2b, domain 2"/>
    <property type="match status" value="1"/>
</dbReference>
<dbReference type="HAMAP" id="MF_01678">
    <property type="entry name" value="Salvage_MtnA"/>
    <property type="match status" value="1"/>
</dbReference>
<dbReference type="InterPro" id="IPR000649">
    <property type="entry name" value="IF-2B-related"/>
</dbReference>
<dbReference type="InterPro" id="IPR005251">
    <property type="entry name" value="IF-M1Pi"/>
</dbReference>
<dbReference type="InterPro" id="IPR042529">
    <property type="entry name" value="IF_2B-like_C"/>
</dbReference>
<dbReference type="InterPro" id="IPR011559">
    <property type="entry name" value="Initiation_fac_2B_a/b/d"/>
</dbReference>
<dbReference type="InterPro" id="IPR027363">
    <property type="entry name" value="M1Pi_N"/>
</dbReference>
<dbReference type="InterPro" id="IPR037171">
    <property type="entry name" value="NagB/RpiA_transferase-like"/>
</dbReference>
<dbReference type="NCBIfam" id="TIGR00524">
    <property type="entry name" value="eIF-2B_rel"/>
    <property type="match status" value="1"/>
</dbReference>
<dbReference type="NCBIfam" id="NF004326">
    <property type="entry name" value="PRK05720.1"/>
    <property type="match status" value="1"/>
</dbReference>
<dbReference type="NCBIfam" id="TIGR00512">
    <property type="entry name" value="salvage_mtnA"/>
    <property type="match status" value="1"/>
</dbReference>
<dbReference type="PANTHER" id="PTHR43475">
    <property type="entry name" value="METHYLTHIORIBOSE-1-PHOSPHATE ISOMERASE"/>
    <property type="match status" value="1"/>
</dbReference>
<dbReference type="PANTHER" id="PTHR43475:SF1">
    <property type="entry name" value="METHYLTHIORIBOSE-1-PHOSPHATE ISOMERASE"/>
    <property type="match status" value="1"/>
</dbReference>
<dbReference type="Pfam" id="PF01008">
    <property type="entry name" value="IF-2B"/>
    <property type="match status" value="1"/>
</dbReference>
<dbReference type="SUPFAM" id="SSF100950">
    <property type="entry name" value="NagB/RpiA/CoA transferase-like"/>
    <property type="match status" value="1"/>
</dbReference>
<accession>A8F3A3</accession>
<comment type="function">
    <text evidence="1">Catalyzes the interconversion of methylthioribose-1-phosphate (MTR-1-P) into methylthioribulose-1-phosphate (MTRu-1-P).</text>
</comment>
<comment type="catalytic activity">
    <reaction evidence="1">
        <text>5-(methylsulfanyl)-alpha-D-ribose 1-phosphate = 5-(methylsulfanyl)-D-ribulose 1-phosphate</text>
        <dbReference type="Rhea" id="RHEA:19989"/>
        <dbReference type="ChEBI" id="CHEBI:58533"/>
        <dbReference type="ChEBI" id="CHEBI:58548"/>
        <dbReference type="EC" id="5.3.1.23"/>
    </reaction>
</comment>
<comment type="pathway">
    <text evidence="1">Amino-acid biosynthesis; L-methionine biosynthesis via salvage pathway; L-methionine from S-methyl-5-thio-alpha-D-ribose 1-phosphate: step 1/6.</text>
</comment>
<comment type="similarity">
    <text evidence="2">Belongs to the eIF-2B alpha/beta/delta subunits family. MtnA subfamily.</text>
</comment>
<evidence type="ECO:0000255" key="1">
    <source>
        <dbReference type="HAMAP-Rule" id="MF_01678"/>
    </source>
</evidence>
<evidence type="ECO:0000305" key="2"/>
<proteinExistence type="inferred from homology"/>
<reference key="1">
    <citation type="submission" date="2007-08" db="EMBL/GenBank/DDBJ databases">
        <title>Complete sequence of Thermotoga lettingae TMO.</title>
        <authorList>
            <consortium name="US DOE Joint Genome Institute"/>
            <person name="Copeland A."/>
            <person name="Lucas S."/>
            <person name="Lapidus A."/>
            <person name="Barry K."/>
            <person name="Glavina del Rio T."/>
            <person name="Dalin E."/>
            <person name="Tice H."/>
            <person name="Pitluck S."/>
            <person name="Foster B."/>
            <person name="Bruce D."/>
            <person name="Schmutz J."/>
            <person name="Larimer F."/>
            <person name="Land M."/>
            <person name="Hauser L."/>
            <person name="Kyrpides N."/>
            <person name="Mikhailova N."/>
            <person name="Nelson K."/>
            <person name="Gogarten J.P."/>
            <person name="Noll K."/>
            <person name="Richardson P."/>
        </authorList>
    </citation>
    <scope>NUCLEOTIDE SEQUENCE [LARGE SCALE GENOMIC DNA]</scope>
    <source>
        <strain>ATCC BAA-301 / DSM 14385 / NBRC 107922 / TMO</strain>
    </source>
</reference>
<gene>
    <name evidence="1" type="primary">mtnA1</name>
    <name type="ordered locus">Tlet_0065</name>
</gene>
<organism>
    <name type="scientific">Pseudothermotoga lettingae (strain ATCC BAA-301 / DSM 14385 / NBRC 107922 / TMO)</name>
    <name type="common">Thermotoga lettingae</name>
    <dbReference type="NCBI Taxonomy" id="416591"/>
    <lineage>
        <taxon>Bacteria</taxon>
        <taxon>Thermotogati</taxon>
        <taxon>Thermotogota</taxon>
        <taxon>Thermotogae</taxon>
        <taxon>Thermotogales</taxon>
        <taxon>Thermotogaceae</taxon>
        <taxon>Pseudothermotoga</taxon>
    </lineage>
</organism>
<sequence length="346" mass="37585">MNFKTLTMQWTGNSLILVDQRKLPHVVNYVECKSYAEVARAIKDMVVRGAPAIGATAAFGYVLGAKEAATLKNQNFIDVMKNVYDVLASTRPTAVNLFWALNRMEKCVDLSKAVDEILEDLEKEAIKIAEEDIRINKTIGTHGQTLLKDGCAVLTHCNAGALATVDYGTALGVIRAAVESGKKIKVYVDETRPYLQGARLTAWELLEIGVETILITDNMAGWVMKQGKIDAVIVGADRIAANGDVANKIGTYSVAVLSNQHGIPFYVAAPTSTIDIKIKNGSEIPIEERSHDEVTHVHGVKVAPDGVAVYNPAFDVTEHQLITAIITEKGILRPPYKENIAKLFGG</sequence>
<name>MTNA1_PSELT</name>
<keyword id="KW-0028">Amino-acid biosynthesis</keyword>
<keyword id="KW-0413">Isomerase</keyword>
<keyword id="KW-0486">Methionine biosynthesis</keyword>
<keyword id="KW-1185">Reference proteome</keyword>